<protein>
    <recommendedName>
        <fullName>EGF domain-specific O-linked N-acetylglucosamine transferase</fullName>
        <ecNumber evidence="2">2.4.1.255</ecNumber>
    </recommendedName>
    <alternativeName>
        <fullName>Extracellular O-linked N-acetylglucosamine transferase</fullName>
    </alternativeName>
</protein>
<organism>
    <name type="scientific">Rattus norvegicus</name>
    <name type="common">Rat</name>
    <dbReference type="NCBI Taxonomy" id="10116"/>
    <lineage>
        <taxon>Eukaryota</taxon>
        <taxon>Metazoa</taxon>
        <taxon>Chordata</taxon>
        <taxon>Craniata</taxon>
        <taxon>Vertebrata</taxon>
        <taxon>Euteleostomi</taxon>
        <taxon>Mammalia</taxon>
        <taxon>Eutheria</taxon>
        <taxon>Euarchontoglires</taxon>
        <taxon>Glires</taxon>
        <taxon>Rodentia</taxon>
        <taxon>Myomorpha</taxon>
        <taxon>Muroidea</taxon>
        <taxon>Muridae</taxon>
        <taxon>Murinae</taxon>
        <taxon>Rattus</taxon>
    </lineage>
</organism>
<accession>Q5NDL0</accession>
<comment type="function">
    <text evidence="2">Catalyzes the transfer of a single N-acetylglucosamine from UDP-GlcNAc to a serine or threonine residue in extracellular proteins resulting in their modification with a beta-linked N-acetylglucosamine (O-GlcNAc). Specifically glycosylates the Thr residue located between the fifth and sixth conserved cysteines of folded EGF-like domains.</text>
</comment>
<comment type="catalytic activity">
    <reaction evidence="2">
        <text>L-seryl-[protein] + UDP-N-acetyl-alpha-D-glucosamine = 3-O-(N-acetyl-beta-D-glucosaminyl)-L-seryl-[protein] + UDP + H(+)</text>
        <dbReference type="Rhea" id="RHEA:48904"/>
        <dbReference type="Rhea" id="RHEA-COMP:9863"/>
        <dbReference type="Rhea" id="RHEA-COMP:12251"/>
        <dbReference type="ChEBI" id="CHEBI:15378"/>
        <dbReference type="ChEBI" id="CHEBI:29999"/>
        <dbReference type="ChEBI" id="CHEBI:57705"/>
        <dbReference type="ChEBI" id="CHEBI:58223"/>
        <dbReference type="ChEBI" id="CHEBI:90838"/>
        <dbReference type="EC" id="2.4.1.255"/>
    </reaction>
</comment>
<comment type="catalytic activity">
    <reaction evidence="2">
        <text>L-threonyl-[protein] + UDP-N-acetyl-alpha-D-glucosamine = 3-O-(N-acetyl-beta-D-glucosaminyl)-L-threonyl-[protein] + UDP + H(+)</text>
        <dbReference type="Rhea" id="RHEA:48908"/>
        <dbReference type="Rhea" id="RHEA-COMP:11060"/>
        <dbReference type="Rhea" id="RHEA-COMP:12252"/>
        <dbReference type="ChEBI" id="CHEBI:15378"/>
        <dbReference type="ChEBI" id="CHEBI:30013"/>
        <dbReference type="ChEBI" id="CHEBI:57705"/>
        <dbReference type="ChEBI" id="CHEBI:58223"/>
        <dbReference type="ChEBI" id="CHEBI:90840"/>
        <dbReference type="EC" id="2.4.1.255"/>
    </reaction>
</comment>
<comment type="subcellular location">
    <subcellularLocation>
        <location evidence="4">Endoplasmic reticulum lumen</location>
    </subcellularLocation>
</comment>
<comment type="similarity">
    <text evidence="5">Belongs to the glycosyltransferase 61 family.</text>
</comment>
<reference key="1">
    <citation type="submission" date="2004-12" db="EMBL/GenBank/DDBJ databases">
        <title>Phylogeny of xylosyltransferases.</title>
        <authorList>
            <person name="Kiefer-Meyer M.C."/>
            <person name="Pagny S."/>
            <person name="Durambure G."/>
            <person name="Faye L."/>
            <person name="Gomord V."/>
            <person name="Mollicone R."/>
            <person name="Oriol R."/>
        </authorList>
    </citation>
    <scope>NUCLEOTIDE SEQUENCE [MRNA]</scope>
    <source>
        <strain>Wistar</strain>
    </source>
</reference>
<dbReference type="EC" id="2.4.1.255" evidence="2"/>
<dbReference type="EMBL" id="AJ868236">
    <property type="protein sequence ID" value="CAI30571.1"/>
    <property type="molecule type" value="mRNA"/>
</dbReference>
<dbReference type="RefSeq" id="NP_001009502.1">
    <property type="nucleotide sequence ID" value="NM_001009502.2"/>
</dbReference>
<dbReference type="RefSeq" id="XP_008761369.1">
    <property type="nucleotide sequence ID" value="XM_008763147.2"/>
</dbReference>
<dbReference type="RefSeq" id="XP_017448256.1">
    <property type="nucleotide sequence ID" value="XM_017592767.1"/>
</dbReference>
<dbReference type="RefSeq" id="XP_063142519.1">
    <property type="nucleotide sequence ID" value="XM_063286449.1"/>
</dbReference>
<dbReference type="RefSeq" id="XP_063142520.1">
    <property type="nucleotide sequence ID" value="XM_063286450.1"/>
</dbReference>
<dbReference type="SMR" id="Q5NDL0"/>
<dbReference type="FunCoup" id="Q5NDL0">
    <property type="interactions" value="1672"/>
</dbReference>
<dbReference type="STRING" id="10116.ENSRNOP00000073147"/>
<dbReference type="CAZy" id="GT61">
    <property type="family name" value="Glycosyltransferase Family 61"/>
</dbReference>
<dbReference type="GlyCosmos" id="Q5NDL0">
    <property type="glycosylation" value="1 site, No reported glycans"/>
</dbReference>
<dbReference type="GlyGen" id="Q5NDL0">
    <property type="glycosylation" value="1 site"/>
</dbReference>
<dbReference type="PhosphoSitePlus" id="Q5NDL0"/>
<dbReference type="jPOST" id="Q5NDL0"/>
<dbReference type="PaxDb" id="10116-ENSRNOP00000034561"/>
<dbReference type="GeneID" id="494219"/>
<dbReference type="KEGG" id="rno:494219"/>
<dbReference type="UCSC" id="RGD:1359357">
    <property type="organism name" value="rat"/>
</dbReference>
<dbReference type="AGR" id="RGD:1359357"/>
<dbReference type="CTD" id="285203"/>
<dbReference type="RGD" id="1359357">
    <property type="gene designation" value="Eogt"/>
</dbReference>
<dbReference type="eggNOG" id="KOG4698">
    <property type="taxonomic scope" value="Eukaryota"/>
</dbReference>
<dbReference type="HOGENOM" id="CLU_039300_0_0_1"/>
<dbReference type="InParanoid" id="Q5NDL0"/>
<dbReference type="PhylomeDB" id="Q5NDL0"/>
<dbReference type="TreeFam" id="TF313716"/>
<dbReference type="PRO" id="PR:Q5NDL0"/>
<dbReference type="Proteomes" id="UP000002494">
    <property type="component" value="Chromosome 4"/>
</dbReference>
<dbReference type="Bgee" id="ENSRNOG00000024533">
    <property type="expression patterns" value="Expressed in lung and 19 other cell types or tissues"/>
</dbReference>
<dbReference type="ExpressionAtlas" id="Q5NDL0">
    <property type="expression patterns" value="baseline and differential"/>
</dbReference>
<dbReference type="GO" id="GO:0005788">
    <property type="term" value="C:endoplasmic reticulum lumen"/>
    <property type="evidence" value="ECO:0000318"/>
    <property type="project" value="GO_Central"/>
</dbReference>
<dbReference type="GO" id="GO:0097363">
    <property type="term" value="F:protein O-acetylglucosaminyltransferase activity"/>
    <property type="evidence" value="ECO:0000250"/>
    <property type="project" value="UniProtKB"/>
</dbReference>
<dbReference type="GO" id="GO:0097370">
    <property type="term" value="P:protein O-GlcNAcylation via threonine"/>
    <property type="evidence" value="ECO:0000318"/>
    <property type="project" value="GO_Central"/>
</dbReference>
<dbReference type="GO" id="GO:0006493">
    <property type="term" value="P:protein O-linked glycosylation"/>
    <property type="evidence" value="ECO:0000250"/>
    <property type="project" value="UniProtKB"/>
</dbReference>
<dbReference type="InterPro" id="IPR049625">
    <property type="entry name" value="Glyco_transf_61_cat"/>
</dbReference>
<dbReference type="InterPro" id="IPR007657">
    <property type="entry name" value="Glycosyltransferase_61"/>
</dbReference>
<dbReference type="PANTHER" id="PTHR20961:SF148">
    <property type="entry name" value="EGF DOMAIN-SPECIFIC O-LINKED N-ACETYLGLUCOSAMINE TRANSFERASE"/>
    <property type="match status" value="1"/>
</dbReference>
<dbReference type="PANTHER" id="PTHR20961">
    <property type="entry name" value="GLYCOSYLTRANSFERASE"/>
    <property type="match status" value="1"/>
</dbReference>
<dbReference type="Pfam" id="PF04577">
    <property type="entry name" value="Glyco_transf_61"/>
    <property type="match status" value="1"/>
</dbReference>
<dbReference type="PROSITE" id="PS00014">
    <property type="entry name" value="ER_TARGET"/>
    <property type="match status" value="1"/>
</dbReference>
<sequence length="527" mass="61524">MLMLLVFGVLLHEVPLSGQDEAHPEADRVPGEALYDYSSLRLPEEHIPFFLHSNRHVASVCREDSHCPYKKHLESLNSCWGYEKSCTPESRFGSPICSYVDLGWTDTLESAQDMFWKQADFGYARERLEEIRMFCRPESASDSSLLCSRYLQYCRATGLYLDLRNIKRNHDRFKEDFLQGGDIGGYCKLDRHALVSEGQRKSPLQSWFAELQGYTQLNFRPIEDAKCDIVVEKPTYFMKLDAGINMYHHFCDFLNLYLTQHINNSFSTDVYIVMWDTSSYGYGDLFSDTWKAFTDYDVIHLKTYDSKKVCFKEAVFSLLPRMRYGLFYNTPLISGCQNTGLFRAFSQHVLHRLNISQEGPKDGKLRVTILARSTEYRKILNQNELVNALKTVSTFEVRVVDYKYRELGFLDQLRITHNTDIFIGMHGAGLTHLLFLPDWAAVFELYNCEDERCYLDLARLRGIYYITWQKPSKVFPQDKGHHPTLGEHPKFTNYSFDVEEFMYLVLQAAEHVLQHPQWPLKKNHDEL</sequence>
<gene>
    <name type="primary">Eogt</name>
    <name type="synonym">Aer61</name>
</gene>
<proteinExistence type="evidence at transcript level"/>
<feature type="signal peptide" evidence="3">
    <location>
        <begin position="1"/>
        <end position="19"/>
    </location>
</feature>
<feature type="chain" id="PRO_0000301974" description="EGF domain-specific O-linked N-acetylglucosamine transferase">
    <location>
        <begin position="20"/>
        <end position="527"/>
    </location>
</feature>
<feature type="short sequence motif" description="Required for optimal activity" evidence="1">
    <location>
        <begin position="295"/>
        <end position="297"/>
    </location>
</feature>
<feature type="short sequence motif" description="Prevents secretion from ER" evidence="4">
    <location>
        <begin position="524"/>
        <end position="527"/>
    </location>
</feature>
<feature type="glycosylation site" description="N-linked (GlcNAc...) asparagine" evidence="3">
    <location>
        <position position="354"/>
    </location>
</feature>
<name>EOGT_RAT</name>
<keyword id="KW-0256">Endoplasmic reticulum</keyword>
<keyword id="KW-0325">Glycoprotein</keyword>
<keyword id="KW-0328">Glycosyltransferase</keyword>
<keyword id="KW-1185">Reference proteome</keyword>
<keyword id="KW-0732">Signal</keyword>
<keyword id="KW-0808">Transferase</keyword>
<evidence type="ECO:0000250" key="1"/>
<evidence type="ECO:0000250" key="2">
    <source>
        <dbReference type="UniProtKB" id="Q8BYW9"/>
    </source>
</evidence>
<evidence type="ECO:0000255" key="3"/>
<evidence type="ECO:0000255" key="4">
    <source>
        <dbReference type="PROSITE-ProRule" id="PRU10138"/>
    </source>
</evidence>
<evidence type="ECO:0000305" key="5"/>